<reference key="1">
    <citation type="journal article" date="1992" name="Mol. Phylogenet. Evol.">
        <title>Phylogenetic relationships in the honeybee (genus Apis) as determined by the sequence of the cytochrome oxidase II region of mitochondrial DNA.</title>
        <authorList>
            <person name="Willis L.G."/>
            <person name="Winston M.L."/>
            <person name="Honda B.M."/>
        </authorList>
    </citation>
    <scope>NUCLEOTIDE SEQUENCE [GENOMIC DNA]</scope>
</reference>
<feature type="chain" id="PRO_0000183497" description="Cytochrome c oxidase subunit 2">
    <location>
        <begin position="1"/>
        <end position="225"/>
    </location>
</feature>
<feature type="topological domain" description="Mitochondrial intermembrane" evidence="2">
    <location>
        <begin position="1"/>
        <end position="25"/>
    </location>
</feature>
<feature type="transmembrane region" description="Helical" evidence="2">
    <location>
        <begin position="26"/>
        <end position="47"/>
    </location>
</feature>
<feature type="topological domain" description="Mitochondrial matrix" evidence="2">
    <location>
        <begin position="48"/>
        <end position="62"/>
    </location>
</feature>
<feature type="transmembrane region" description="Helical" evidence="2">
    <location>
        <begin position="63"/>
        <end position="82"/>
    </location>
</feature>
<feature type="topological domain" description="Mitochondrial intermembrane" evidence="2">
    <location>
        <begin position="83"/>
        <end position="225"/>
    </location>
</feature>
<feature type="binding site" evidence="1">
    <location>
        <position position="159"/>
    </location>
    <ligand>
        <name>Cu cation</name>
        <dbReference type="ChEBI" id="CHEBI:23378"/>
        <label>A1</label>
    </ligand>
</feature>
<feature type="binding site" evidence="1">
    <location>
        <position position="194"/>
    </location>
    <ligand>
        <name>Cu cation</name>
        <dbReference type="ChEBI" id="CHEBI:23378"/>
        <label>A1</label>
    </ligand>
</feature>
<feature type="binding site" evidence="1">
    <location>
        <position position="194"/>
    </location>
    <ligand>
        <name>Cu cation</name>
        <dbReference type="ChEBI" id="CHEBI:23378"/>
        <label>A2</label>
    </ligand>
</feature>
<feature type="binding site" evidence="1">
    <location>
        <position position="196"/>
    </location>
    <ligand>
        <name>Cu cation</name>
        <dbReference type="ChEBI" id="CHEBI:23378"/>
        <label>A2</label>
    </ligand>
</feature>
<feature type="binding site" evidence="1">
    <location>
        <position position="196"/>
    </location>
    <ligand>
        <name>Mg(2+)</name>
        <dbReference type="ChEBI" id="CHEBI:18420"/>
        <note>ligand shared with subunit 1</note>
    </ligand>
</feature>
<feature type="binding site" evidence="1">
    <location>
        <position position="198"/>
    </location>
    <ligand>
        <name>Cu cation</name>
        <dbReference type="ChEBI" id="CHEBI:23378"/>
        <label>A1</label>
    </ligand>
</feature>
<feature type="binding site" evidence="1">
    <location>
        <position position="198"/>
    </location>
    <ligand>
        <name>Cu cation</name>
        <dbReference type="ChEBI" id="CHEBI:23378"/>
        <label>A2</label>
    </ligand>
</feature>
<feature type="binding site" evidence="1">
    <location>
        <position position="202"/>
    </location>
    <ligand>
        <name>Cu cation</name>
        <dbReference type="ChEBI" id="CHEBI:23378"/>
        <label>A2</label>
    </ligand>
</feature>
<feature type="binding site" evidence="1">
    <location>
        <position position="205"/>
    </location>
    <ligand>
        <name>Cu cation</name>
        <dbReference type="ChEBI" id="CHEBI:23378"/>
        <label>A1</label>
    </ligand>
</feature>
<accession>P50267</accession>
<dbReference type="EC" id="7.1.1.9"/>
<dbReference type="EMBL" id="M77211">
    <property type="protein sequence ID" value="AAA87246.1"/>
    <property type="molecule type" value="Genomic_DNA"/>
</dbReference>
<dbReference type="SMR" id="P50267"/>
<dbReference type="OrthoDB" id="539285at2759"/>
<dbReference type="GO" id="GO:0005743">
    <property type="term" value="C:mitochondrial inner membrane"/>
    <property type="evidence" value="ECO:0007669"/>
    <property type="project" value="UniProtKB-SubCell"/>
</dbReference>
<dbReference type="GO" id="GO:0005507">
    <property type="term" value="F:copper ion binding"/>
    <property type="evidence" value="ECO:0007669"/>
    <property type="project" value="InterPro"/>
</dbReference>
<dbReference type="GO" id="GO:0004129">
    <property type="term" value="F:cytochrome-c oxidase activity"/>
    <property type="evidence" value="ECO:0007669"/>
    <property type="project" value="UniProtKB-EC"/>
</dbReference>
<dbReference type="GO" id="GO:0042773">
    <property type="term" value="P:ATP synthesis coupled electron transport"/>
    <property type="evidence" value="ECO:0007669"/>
    <property type="project" value="TreeGrafter"/>
</dbReference>
<dbReference type="CDD" id="cd13912">
    <property type="entry name" value="CcO_II_C"/>
    <property type="match status" value="1"/>
</dbReference>
<dbReference type="FunFam" id="2.60.40.420:FF:000001">
    <property type="entry name" value="Cytochrome c oxidase subunit 2"/>
    <property type="match status" value="1"/>
</dbReference>
<dbReference type="Gene3D" id="1.10.287.90">
    <property type="match status" value="1"/>
</dbReference>
<dbReference type="Gene3D" id="2.60.40.420">
    <property type="entry name" value="Cupredoxins - blue copper proteins"/>
    <property type="match status" value="1"/>
</dbReference>
<dbReference type="InterPro" id="IPR045187">
    <property type="entry name" value="CcO_II"/>
</dbReference>
<dbReference type="InterPro" id="IPR002429">
    <property type="entry name" value="CcO_II-like_C"/>
</dbReference>
<dbReference type="InterPro" id="IPR034210">
    <property type="entry name" value="CcO_II_C"/>
</dbReference>
<dbReference type="InterPro" id="IPR001505">
    <property type="entry name" value="Copper_CuA"/>
</dbReference>
<dbReference type="InterPro" id="IPR008972">
    <property type="entry name" value="Cupredoxin"/>
</dbReference>
<dbReference type="InterPro" id="IPR014222">
    <property type="entry name" value="Cyt_c_oxidase_su2"/>
</dbReference>
<dbReference type="InterPro" id="IPR011759">
    <property type="entry name" value="Cyt_c_oxidase_su2_TM_dom"/>
</dbReference>
<dbReference type="InterPro" id="IPR036257">
    <property type="entry name" value="Cyt_c_oxidase_su2_TM_sf"/>
</dbReference>
<dbReference type="NCBIfam" id="TIGR02866">
    <property type="entry name" value="CoxB"/>
    <property type="match status" value="1"/>
</dbReference>
<dbReference type="PANTHER" id="PTHR22888:SF9">
    <property type="entry name" value="CYTOCHROME C OXIDASE SUBUNIT 2"/>
    <property type="match status" value="1"/>
</dbReference>
<dbReference type="PANTHER" id="PTHR22888">
    <property type="entry name" value="CYTOCHROME C OXIDASE, SUBUNIT II"/>
    <property type="match status" value="1"/>
</dbReference>
<dbReference type="Pfam" id="PF00116">
    <property type="entry name" value="COX2"/>
    <property type="match status" value="1"/>
</dbReference>
<dbReference type="Pfam" id="PF02790">
    <property type="entry name" value="COX2_TM"/>
    <property type="match status" value="1"/>
</dbReference>
<dbReference type="PRINTS" id="PR01166">
    <property type="entry name" value="CYCOXIDASEII"/>
</dbReference>
<dbReference type="SUPFAM" id="SSF49503">
    <property type="entry name" value="Cupredoxins"/>
    <property type="match status" value="1"/>
</dbReference>
<dbReference type="SUPFAM" id="SSF81464">
    <property type="entry name" value="Cytochrome c oxidase subunit II-like, transmembrane region"/>
    <property type="match status" value="1"/>
</dbReference>
<dbReference type="PROSITE" id="PS00078">
    <property type="entry name" value="COX2"/>
    <property type="match status" value="1"/>
</dbReference>
<dbReference type="PROSITE" id="PS50857">
    <property type="entry name" value="COX2_CUA"/>
    <property type="match status" value="1"/>
</dbReference>
<dbReference type="PROSITE" id="PS50999">
    <property type="entry name" value="COX2_TM"/>
    <property type="match status" value="1"/>
</dbReference>
<gene>
    <name type="primary">COII</name>
</gene>
<geneLocation type="mitochondrion"/>
<evidence type="ECO:0000250" key="1">
    <source>
        <dbReference type="UniProtKB" id="P00410"/>
    </source>
</evidence>
<evidence type="ECO:0000255" key="2"/>
<evidence type="ECO:0000305" key="3"/>
<keyword id="KW-0186">Copper</keyword>
<keyword id="KW-0249">Electron transport</keyword>
<keyword id="KW-0460">Magnesium</keyword>
<keyword id="KW-0472">Membrane</keyword>
<keyword id="KW-0479">Metal-binding</keyword>
<keyword id="KW-0496">Mitochondrion</keyword>
<keyword id="KW-0999">Mitochondrion inner membrane</keyword>
<keyword id="KW-0679">Respiratory chain</keyword>
<keyword id="KW-1278">Translocase</keyword>
<keyword id="KW-0812">Transmembrane</keyword>
<keyword id="KW-1133">Transmembrane helix</keyword>
<keyword id="KW-0813">Transport</keyword>
<sequence length="225" mass="26694">MSTWMMFMFQESNSLYADNLVSFHNMVMIIVIMISTLTVYIIFDLFLNKFSNLYLLKNHNIEIIWMIVPIVILLIICFPSLKILYLIDEIVNPFFSIKSIGHQWYWSYEYPEFNNIEFYSYMLNYSDLNQFRLLETDNRMIIPMKIPLRLITTSTDVIHSWTVPSLGIKVDAVPGRINQLNLISKRPGIFFGQCSEICGMNHSFMPIMVESTSFKYFMNWIYKMN</sequence>
<organism>
    <name type="scientific">Apis florea</name>
    <name type="common">Dwarf honeybee</name>
    <dbReference type="NCBI Taxonomy" id="7463"/>
    <lineage>
        <taxon>Eukaryota</taxon>
        <taxon>Metazoa</taxon>
        <taxon>Ecdysozoa</taxon>
        <taxon>Arthropoda</taxon>
        <taxon>Hexapoda</taxon>
        <taxon>Insecta</taxon>
        <taxon>Pterygota</taxon>
        <taxon>Neoptera</taxon>
        <taxon>Endopterygota</taxon>
        <taxon>Hymenoptera</taxon>
        <taxon>Apocrita</taxon>
        <taxon>Aculeata</taxon>
        <taxon>Apoidea</taxon>
        <taxon>Anthophila</taxon>
        <taxon>Apidae</taxon>
        <taxon>Apis</taxon>
    </lineage>
</organism>
<name>COX2_APIFL</name>
<proteinExistence type="inferred from homology"/>
<comment type="function">
    <text evidence="1">Component of the cytochrome c oxidase, the last enzyme in the mitochondrial electron transport chain which drives oxidative phosphorylation. The respiratory chain contains 3 multisubunit complexes succinate dehydrogenase (complex II, CII), ubiquinol-cytochrome c oxidoreductase (cytochrome b-c1 complex, complex III, CIII) and cytochrome c oxidase (complex IV, CIV), that cooperate to transfer electrons derived from NADH and succinate to molecular oxygen, creating an electrochemical gradient over the inner membrane that drives transmembrane transport and the ATP synthase. Cytochrome c oxidase is the component of the respiratory chain that catalyzes the reduction of oxygen to water. Electrons originating from reduced cytochrome c in the intermembrane space (IMS) are transferred via the dinuclear copper A center (CU(A)) of subunit 2 and heme A of subunit 1 to the active site in subunit 1, a binuclear center (BNC) formed by heme A3 and copper B (CU(B)). The BNC reduces molecular oxygen to 2 water molecules using 4 electrons from cytochrome c in the IMS and 4 protons from the mitochondrial matrix.</text>
</comment>
<comment type="catalytic activity">
    <reaction evidence="1">
        <text>4 Fe(II)-[cytochrome c] + O2 + 8 H(+)(in) = 4 Fe(III)-[cytochrome c] + 2 H2O + 4 H(+)(out)</text>
        <dbReference type="Rhea" id="RHEA:11436"/>
        <dbReference type="Rhea" id="RHEA-COMP:10350"/>
        <dbReference type="Rhea" id="RHEA-COMP:14399"/>
        <dbReference type="ChEBI" id="CHEBI:15377"/>
        <dbReference type="ChEBI" id="CHEBI:15378"/>
        <dbReference type="ChEBI" id="CHEBI:15379"/>
        <dbReference type="ChEBI" id="CHEBI:29033"/>
        <dbReference type="ChEBI" id="CHEBI:29034"/>
        <dbReference type="EC" id="7.1.1.9"/>
    </reaction>
    <physiologicalReaction direction="left-to-right" evidence="1">
        <dbReference type="Rhea" id="RHEA:11437"/>
    </physiologicalReaction>
</comment>
<comment type="cofactor">
    <cofactor evidence="1">
        <name>Cu cation</name>
        <dbReference type="ChEBI" id="CHEBI:23378"/>
    </cofactor>
    <text evidence="1">Binds a dinuclear copper A center per subunit.</text>
</comment>
<comment type="subunit">
    <text evidence="1">Component of the cytochrome c oxidase (complex IV, CIV), a multisubunit enzyme composed of a catalytic core of 3 subunits and several supernumerary subunits. The complex exists as a monomer or a dimer and forms supercomplexes (SCs) in the inner mitochondrial membrane with ubiquinol-cytochrome c oxidoreductase (cytochrome b-c1 complex, complex III, CIII).</text>
</comment>
<comment type="subcellular location">
    <subcellularLocation>
        <location evidence="1">Mitochondrion inner membrane</location>
        <topology evidence="1">Multi-pass membrane protein</topology>
    </subcellularLocation>
</comment>
<comment type="similarity">
    <text evidence="3">Belongs to the cytochrome c oxidase subunit 2 family.</text>
</comment>
<protein>
    <recommendedName>
        <fullName>Cytochrome c oxidase subunit 2</fullName>
        <ecNumber>7.1.1.9</ecNumber>
    </recommendedName>
    <alternativeName>
        <fullName>Cytochrome c oxidase polypeptide II</fullName>
    </alternativeName>
</protein>